<proteinExistence type="inferred from homology"/>
<comment type="function">
    <text evidence="1">The RuvA-RuvB-RuvC complex processes Holliday junction (HJ) DNA during genetic recombination and DNA repair. Endonuclease that resolves HJ intermediates. Cleaves cruciform DNA by making single-stranded nicks across the HJ at symmetrical positions within the homologous arms, yielding a 5'-phosphate and a 3'-hydroxyl group; requires a central core of homology in the junction. The consensus cleavage sequence is 5'-(A/T)TT(C/G)-3'. Cleavage occurs on the 3'-side of the TT dinucleotide at the point of strand exchange. HJ branch migration catalyzed by RuvA-RuvB allows RuvC to scan DNA until it finds its consensus sequence, where it cleaves and resolves the cruciform DNA.</text>
</comment>
<comment type="catalytic activity">
    <reaction evidence="1">
        <text>Endonucleolytic cleavage at a junction such as a reciprocal single-stranded crossover between two homologous DNA duplexes (Holliday junction).</text>
        <dbReference type="EC" id="3.1.21.10"/>
    </reaction>
</comment>
<comment type="cofactor">
    <cofactor evidence="1">
        <name>Mg(2+)</name>
        <dbReference type="ChEBI" id="CHEBI:18420"/>
    </cofactor>
    <text evidence="1">Binds 2 Mg(2+) ion per subunit.</text>
</comment>
<comment type="subunit">
    <text evidence="1">Homodimer which binds Holliday junction (HJ) DNA. The HJ becomes 2-fold symmetrical on binding to RuvC with unstacked arms; it has a different conformation from HJ DNA in complex with RuvA. In the full resolvosome a probable DNA-RuvA(4)-RuvB(12)-RuvC(2) complex forms which resolves the HJ.</text>
</comment>
<comment type="subcellular location">
    <subcellularLocation>
        <location evidence="1">Cytoplasm</location>
    </subcellularLocation>
</comment>
<comment type="similarity">
    <text evidence="1">Belongs to the RuvC family.</text>
</comment>
<gene>
    <name evidence="1" type="primary">ruvC</name>
    <name type="ordered locus">ECDH10B_2004</name>
</gene>
<feature type="chain" id="PRO_1000090523" description="Crossover junction endodeoxyribonuclease RuvC">
    <location>
        <begin position="1"/>
        <end position="173"/>
    </location>
</feature>
<feature type="active site" evidence="1">
    <location>
        <position position="8"/>
    </location>
</feature>
<feature type="active site" evidence="1">
    <location>
        <position position="67"/>
    </location>
</feature>
<feature type="active site" evidence="1">
    <location>
        <position position="139"/>
    </location>
</feature>
<feature type="binding site" evidence="1">
    <location>
        <position position="8"/>
    </location>
    <ligand>
        <name>Mg(2+)</name>
        <dbReference type="ChEBI" id="CHEBI:18420"/>
        <label>1</label>
    </ligand>
</feature>
<feature type="binding site" evidence="1">
    <location>
        <position position="67"/>
    </location>
    <ligand>
        <name>Mg(2+)</name>
        <dbReference type="ChEBI" id="CHEBI:18420"/>
        <label>2</label>
    </ligand>
</feature>
<feature type="binding site" evidence="1">
    <location>
        <position position="139"/>
    </location>
    <ligand>
        <name>Mg(2+)</name>
        <dbReference type="ChEBI" id="CHEBI:18420"/>
        <label>1</label>
    </ligand>
</feature>
<name>RUVC_ECODH</name>
<evidence type="ECO:0000255" key="1">
    <source>
        <dbReference type="HAMAP-Rule" id="MF_00034"/>
    </source>
</evidence>
<protein>
    <recommendedName>
        <fullName evidence="1">Crossover junction endodeoxyribonuclease RuvC</fullName>
        <ecNumber evidence="1">3.1.21.10</ecNumber>
    </recommendedName>
    <alternativeName>
        <fullName evidence="1">Holliday junction nuclease RuvC</fullName>
    </alternativeName>
    <alternativeName>
        <fullName evidence="1">Holliday junction resolvase RuvC</fullName>
    </alternativeName>
</protein>
<sequence>MAIILGIDPGSRVTGYGVIRQVGRQLSYLGSGCIRTKVDDLPSRLKLIYAGVTEIITQFQPDYFAIEQVFMAKNADSALKLGQARGVAIVAAVNQELPVFEYAARQVKQTVVGIGSAEKSQVQHMVRTLLKLPANPQADAADALAIAITHCHVSQNAMQMSESRLNLARGRLR</sequence>
<organism>
    <name type="scientific">Escherichia coli (strain K12 / DH10B)</name>
    <dbReference type="NCBI Taxonomy" id="316385"/>
    <lineage>
        <taxon>Bacteria</taxon>
        <taxon>Pseudomonadati</taxon>
        <taxon>Pseudomonadota</taxon>
        <taxon>Gammaproteobacteria</taxon>
        <taxon>Enterobacterales</taxon>
        <taxon>Enterobacteriaceae</taxon>
        <taxon>Escherichia</taxon>
    </lineage>
</organism>
<dbReference type="EC" id="3.1.21.10" evidence="1"/>
<dbReference type="EMBL" id="CP000948">
    <property type="protein sequence ID" value="ACB03061.1"/>
    <property type="molecule type" value="Genomic_DNA"/>
</dbReference>
<dbReference type="RefSeq" id="WP_001295503.1">
    <property type="nucleotide sequence ID" value="NC_010473.1"/>
</dbReference>
<dbReference type="SMR" id="B1XHD1"/>
<dbReference type="GeneID" id="89516631"/>
<dbReference type="KEGG" id="ecd:ECDH10B_2004"/>
<dbReference type="HOGENOM" id="CLU_091257_2_1_6"/>
<dbReference type="GO" id="GO:0005737">
    <property type="term" value="C:cytoplasm"/>
    <property type="evidence" value="ECO:0007669"/>
    <property type="project" value="UniProtKB-SubCell"/>
</dbReference>
<dbReference type="GO" id="GO:0048476">
    <property type="term" value="C:Holliday junction resolvase complex"/>
    <property type="evidence" value="ECO:0007669"/>
    <property type="project" value="UniProtKB-UniRule"/>
</dbReference>
<dbReference type="GO" id="GO:0008821">
    <property type="term" value="F:crossover junction DNA endonuclease activity"/>
    <property type="evidence" value="ECO:0007669"/>
    <property type="project" value="UniProtKB-UniRule"/>
</dbReference>
<dbReference type="GO" id="GO:0003677">
    <property type="term" value="F:DNA binding"/>
    <property type="evidence" value="ECO:0007669"/>
    <property type="project" value="UniProtKB-KW"/>
</dbReference>
<dbReference type="GO" id="GO:0000287">
    <property type="term" value="F:magnesium ion binding"/>
    <property type="evidence" value="ECO:0007669"/>
    <property type="project" value="UniProtKB-UniRule"/>
</dbReference>
<dbReference type="GO" id="GO:0006310">
    <property type="term" value="P:DNA recombination"/>
    <property type="evidence" value="ECO:0007669"/>
    <property type="project" value="UniProtKB-UniRule"/>
</dbReference>
<dbReference type="GO" id="GO:0006281">
    <property type="term" value="P:DNA repair"/>
    <property type="evidence" value="ECO:0007669"/>
    <property type="project" value="UniProtKB-UniRule"/>
</dbReference>
<dbReference type="CDD" id="cd16962">
    <property type="entry name" value="RuvC"/>
    <property type="match status" value="1"/>
</dbReference>
<dbReference type="FunFam" id="3.30.420.10:FF:000002">
    <property type="entry name" value="Crossover junction endodeoxyribonuclease RuvC"/>
    <property type="match status" value="1"/>
</dbReference>
<dbReference type="Gene3D" id="3.30.420.10">
    <property type="entry name" value="Ribonuclease H-like superfamily/Ribonuclease H"/>
    <property type="match status" value="1"/>
</dbReference>
<dbReference type="HAMAP" id="MF_00034">
    <property type="entry name" value="RuvC"/>
    <property type="match status" value="1"/>
</dbReference>
<dbReference type="InterPro" id="IPR012337">
    <property type="entry name" value="RNaseH-like_sf"/>
</dbReference>
<dbReference type="InterPro" id="IPR036397">
    <property type="entry name" value="RNaseH_sf"/>
</dbReference>
<dbReference type="InterPro" id="IPR020563">
    <property type="entry name" value="X-over_junc_endoDNase_Mg_BS"/>
</dbReference>
<dbReference type="InterPro" id="IPR002176">
    <property type="entry name" value="X-over_junc_endoDNase_RuvC"/>
</dbReference>
<dbReference type="NCBIfam" id="NF000711">
    <property type="entry name" value="PRK00039.2-1"/>
    <property type="match status" value="1"/>
</dbReference>
<dbReference type="NCBIfam" id="TIGR00228">
    <property type="entry name" value="ruvC"/>
    <property type="match status" value="1"/>
</dbReference>
<dbReference type="PANTHER" id="PTHR30194">
    <property type="entry name" value="CROSSOVER JUNCTION ENDODEOXYRIBONUCLEASE RUVC"/>
    <property type="match status" value="1"/>
</dbReference>
<dbReference type="PANTHER" id="PTHR30194:SF3">
    <property type="entry name" value="CROSSOVER JUNCTION ENDODEOXYRIBONUCLEASE RUVC"/>
    <property type="match status" value="1"/>
</dbReference>
<dbReference type="Pfam" id="PF02075">
    <property type="entry name" value="RuvC"/>
    <property type="match status" value="1"/>
</dbReference>
<dbReference type="PRINTS" id="PR00696">
    <property type="entry name" value="RSOLVASERUVC"/>
</dbReference>
<dbReference type="SUPFAM" id="SSF53098">
    <property type="entry name" value="Ribonuclease H-like"/>
    <property type="match status" value="1"/>
</dbReference>
<dbReference type="PROSITE" id="PS01321">
    <property type="entry name" value="RUVC"/>
    <property type="match status" value="1"/>
</dbReference>
<reference key="1">
    <citation type="journal article" date="2008" name="J. Bacteriol.">
        <title>The complete genome sequence of Escherichia coli DH10B: insights into the biology of a laboratory workhorse.</title>
        <authorList>
            <person name="Durfee T."/>
            <person name="Nelson R."/>
            <person name="Baldwin S."/>
            <person name="Plunkett G. III"/>
            <person name="Burland V."/>
            <person name="Mau B."/>
            <person name="Petrosino J.F."/>
            <person name="Qin X."/>
            <person name="Muzny D.M."/>
            <person name="Ayele M."/>
            <person name="Gibbs R.A."/>
            <person name="Csorgo B."/>
            <person name="Posfai G."/>
            <person name="Weinstock G.M."/>
            <person name="Blattner F.R."/>
        </authorList>
    </citation>
    <scope>NUCLEOTIDE SEQUENCE [LARGE SCALE GENOMIC DNA]</scope>
    <source>
        <strain>K12 / DH10B</strain>
    </source>
</reference>
<accession>B1XHD1</accession>
<keyword id="KW-0963">Cytoplasm</keyword>
<keyword id="KW-0227">DNA damage</keyword>
<keyword id="KW-0233">DNA recombination</keyword>
<keyword id="KW-0234">DNA repair</keyword>
<keyword id="KW-0238">DNA-binding</keyword>
<keyword id="KW-0255">Endonuclease</keyword>
<keyword id="KW-0378">Hydrolase</keyword>
<keyword id="KW-0460">Magnesium</keyword>
<keyword id="KW-0479">Metal-binding</keyword>
<keyword id="KW-0540">Nuclease</keyword>